<accession>A1C4T4</accession>
<proteinExistence type="inferred from homology"/>
<keyword id="KW-1185">Reference proteome</keyword>
<keyword id="KW-0732">Signal</keyword>
<feature type="signal peptide" evidence="2">
    <location>
        <begin position="1"/>
        <end position="20"/>
    </location>
</feature>
<feature type="chain" id="PRO_0000408591" description="Long chronological lifespan protein 2">
    <location>
        <begin position="21"/>
        <end position="121"/>
    </location>
</feature>
<reference key="1">
    <citation type="journal article" date="2008" name="PLoS Genet.">
        <title>Genomic islands in the pathogenic filamentous fungus Aspergillus fumigatus.</title>
        <authorList>
            <person name="Fedorova N.D."/>
            <person name="Khaldi N."/>
            <person name="Joardar V.S."/>
            <person name="Maiti R."/>
            <person name="Amedeo P."/>
            <person name="Anderson M.J."/>
            <person name="Crabtree J."/>
            <person name="Silva J.C."/>
            <person name="Badger J.H."/>
            <person name="Albarraq A."/>
            <person name="Angiuoli S."/>
            <person name="Bussey H."/>
            <person name="Bowyer P."/>
            <person name="Cotty P.J."/>
            <person name="Dyer P.S."/>
            <person name="Egan A."/>
            <person name="Galens K."/>
            <person name="Fraser-Liggett C.M."/>
            <person name="Haas B.J."/>
            <person name="Inman J.M."/>
            <person name="Kent R."/>
            <person name="Lemieux S."/>
            <person name="Malavazi I."/>
            <person name="Orvis J."/>
            <person name="Roemer T."/>
            <person name="Ronning C.M."/>
            <person name="Sundaram J.P."/>
            <person name="Sutton G."/>
            <person name="Turner G."/>
            <person name="Venter J.C."/>
            <person name="White O.R."/>
            <person name="Whitty B.R."/>
            <person name="Youngman P."/>
            <person name="Wolfe K.H."/>
            <person name="Goldman G.H."/>
            <person name="Wortman J.R."/>
            <person name="Jiang B."/>
            <person name="Denning D.W."/>
            <person name="Nierman W.C."/>
        </authorList>
    </citation>
    <scope>NUCLEOTIDE SEQUENCE [LARGE SCALE GENOMIC DNA]</scope>
    <source>
        <strain>ATCC 1007 / CBS 513.65 / DSM 816 / NCTC 3887 / NRRL 1 / QM 1276 / 107</strain>
    </source>
</reference>
<comment type="function">
    <text evidence="1">Probable component of the endoplasmic reticulum-associated degradation (ERAD) pathway.</text>
</comment>
<comment type="similarity">
    <text evidence="3">Belongs to the LCL2 family.</text>
</comment>
<evidence type="ECO:0000250" key="1"/>
<evidence type="ECO:0000255" key="2"/>
<evidence type="ECO:0000305" key="3"/>
<sequence length="121" mass="13288">MISVWIRVLGALLLASVAQAQFQFFEQMFGGGHQEHHQQGSQNSASDSSRYQQLWEATNCNKYLCPGTLACVDFPHHCPCEHPNVEDKVELGEGSAVCISKGGYKPGEAARKIELARKGLL</sequence>
<dbReference type="EMBL" id="DS027004">
    <property type="protein sequence ID" value="EAW14702.1"/>
    <property type="molecule type" value="Genomic_DNA"/>
</dbReference>
<dbReference type="RefSeq" id="XP_001276128.1">
    <property type="nucleotide sequence ID" value="XM_001276127.1"/>
</dbReference>
<dbReference type="EnsemblFungi" id="EAW14702">
    <property type="protein sequence ID" value="EAW14702"/>
    <property type="gene ID" value="ACLA_001130"/>
</dbReference>
<dbReference type="GeneID" id="4708591"/>
<dbReference type="KEGG" id="act:ACLA_001130"/>
<dbReference type="VEuPathDB" id="FungiDB:ACLA_001130"/>
<dbReference type="eggNOG" id="ENOG502S416">
    <property type="taxonomic scope" value="Eukaryota"/>
</dbReference>
<dbReference type="HOGENOM" id="CLU_142363_0_0_1"/>
<dbReference type="OMA" id="DNYLCPD"/>
<dbReference type="OrthoDB" id="2234316at2759"/>
<dbReference type="Proteomes" id="UP000006701">
    <property type="component" value="Unassembled WGS sequence"/>
</dbReference>
<dbReference type="GO" id="GO:0036503">
    <property type="term" value="P:ERAD pathway"/>
    <property type="evidence" value="ECO:0007669"/>
    <property type="project" value="TreeGrafter"/>
</dbReference>
<dbReference type="CDD" id="cd23996">
    <property type="entry name" value="LCL2-like"/>
    <property type="match status" value="1"/>
</dbReference>
<dbReference type="InterPro" id="IPR034543">
    <property type="entry name" value="LCL2"/>
</dbReference>
<dbReference type="PANTHER" id="PTHR38425">
    <property type="entry name" value="LONG CHRONOLOGICAL LIFESPAN PROTEIN 2"/>
    <property type="match status" value="1"/>
</dbReference>
<dbReference type="PANTHER" id="PTHR38425:SF1">
    <property type="entry name" value="LONG CHRONOLOGICAL LIFESPAN PROTEIN 2"/>
    <property type="match status" value="1"/>
</dbReference>
<name>LCL2_ASPCL</name>
<protein>
    <recommendedName>
        <fullName>Long chronological lifespan protein 2</fullName>
    </recommendedName>
</protein>
<organism>
    <name type="scientific">Aspergillus clavatus (strain ATCC 1007 / CBS 513.65 / DSM 816 / NCTC 3887 / NRRL 1 / QM 1276 / 107)</name>
    <dbReference type="NCBI Taxonomy" id="344612"/>
    <lineage>
        <taxon>Eukaryota</taxon>
        <taxon>Fungi</taxon>
        <taxon>Dikarya</taxon>
        <taxon>Ascomycota</taxon>
        <taxon>Pezizomycotina</taxon>
        <taxon>Eurotiomycetes</taxon>
        <taxon>Eurotiomycetidae</taxon>
        <taxon>Eurotiales</taxon>
        <taxon>Aspergillaceae</taxon>
        <taxon>Aspergillus</taxon>
        <taxon>Aspergillus subgen. Fumigati</taxon>
    </lineage>
</organism>
<gene>
    <name type="primary">lcl2</name>
    <name type="ORF">ACLA_001130</name>
</gene>